<comment type="catalytic activity">
    <reaction evidence="1">
        <text>tRNA(His) + L-histidine + ATP = L-histidyl-tRNA(His) + AMP + diphosphate + H(+)</text>
        <dbReference type="Rhea" id="RHEA:17313"/>
        <dbReference type="Rhea" id="RHEA-COMP:9665"/>
        <dbReference type="Rhea" id="RHEA-COMP:9689"/>
        <dbReference type="ChEBI" id="CHEBI:15378"/>
        <dbReference type="ChEBI" id="CHEBI:30616"/>
        <dbReference type="ChEBI" id="CHEBI:33019"/>
        <dbReference type="ChEBI" id="CHEBI:57595"/>
        <dbReference type="ChEBI" id="CHEBI:78442"/>
        <dbReference type="ChEBI" id="CHEBI:78527"/>
        <dbReference type="ChEBI" id="CHEBI:456215"/>
        <dbReference type="EC" id="6.1.1.21"/>
    </reaction>
</comment>
<comment type="subunit">
    <text evidence="1">Homodimer.</text>
</comment>
<comment type="subcellular location">
    <subcellularLocation>
        <location evidence="1">Cytoplasm</location>
    </subcellularLocation>
</comment>
<comment type="similarity">
    <text evidence="1">Belongs to the class-II aminoacyl-tRNA synthetase family.</text>
</comment>
<proteinExistence type="inferred from homology"/>
<dbReference type="EC" id="6.1.1.21" evidence="1"/>
<dbReference type="EMBL" id="CP001205">
    <property type="protein sequence ID" value="ACK74851.1"/>
    <property type="molecule type" value="Genomic_DNA"/>
</dbReference>
<dbReference type="RefSeq" id="WP_002656264.1">
    <property type="nucleotide sequence ID" value="NC_011728.1"/>
</dbReference>
<dbReference type="SMR" id="B7J168"/>
<dbReference type="GeneID" id="56568083"/>
<dbReference type="KEGG" id="bbz:BbuZS7_0135"/>
<dbReference type="HOGENOM" id="CLU_025113_3_0_12"/>
<dbReference type="Proteomes" id="UP000006901">
    <property type="component" value="Chromosome"/>
</dbReference>
<dbReference type="GO" id="GO:0005737">
    <property type="term" value="C:cytoplasm"/>
    <property type="evidence" value="ECO:0007669"/>
    <property type="project" value="UniProtKB-SubCell"/>
</dbReference>
<dbReference type="GO" id="GO:0005524">
    <property type="term" value="F:ATP binding"/>
    <property type="evidence" value="ECO:0007669"/>
    <property type="project" value="UniProtKB-UniRule"/>
</dbReference>
<dbReference type="GO" id="GO:0004821">
    <property type="term" value="F:histidine-tRNA ligase activity"/>
    <property type="evidence" value="ECO:0007669"/>
    <property type="project" value="UniProtKB-UniRule"/>
</dbReference>
<dbReference type="GO" id="GO:0006427">
    <property type="term" value="P:histidyl-tRNA aminoacylation"/>
    <property type="evidence" value="ECO:0007669"/>
    <property type="project" value="UniProtKB-UniRule"/>
</dbReference>
<dbReference type="CDD" id="cd00773">
    <property type="entry name" value="HisRS-like_core"/>
    <property type="match status" value="1"/>
</dbReference>
<dbReference type="CDD" id="cd00859">
    <property type="entry name" value="HisRS_anticodon"/>
    <property type="match status" value="1"/>
</dbReference>
<dbReference type="Gene3D" id="3.40.50.800">
    <property type="entry name" value="Anticodon-binding domain"/>
    <property type="match status" value="1"/>
</dbReference>
<dbReference type="Gene3D" id="3.30.930.10">
    <property type="entry name" value="Bira Bifunctional Protein, Domain 2"/>
    <property type="match status" value="1"/>
</dbReference>
<dbReference type="HAMAP" id="MF_00127">
    <property type="entry name" value="His_tRNA_synth"/>
    <property type="match status" value="1"/>
</dbReference>
<dbReference type="InterPro" id="IPR006195">
    <property type="entry name" value="aa-tRNA-synth_II"/>
</dbReference>
<dbReference type="InterPro" id="IPR045864">
    <property type="entry name" value="aa-tRNA-synth_II/BPL/LPL"/>
</dbReference>
<dbReference type="InterPro" id="IPR004154">
    <property type="entry name" value="Anticodon-bd"/>
</dbReference>
<dbReference type="InterPro" id="IPR036621">
    <property type="entry name" value="Anticodon-bd_dom_sf"/>
</dbReference>
<dbReference type="InterPro" id="IPR015807">
    <property type="entry name" value="His-tRNA-ligase"/>
</dbReference>
<dbReference type="InterPro" id="IPR041715">
    <property type="entry name" value="HisRS-like_core"/>
</dbReference>
<dbReference type="InterPro" id="IPR004516">
    <property type="entry name" value="HisRS/HisZ"/>
</dbReference>
<dbReference type="InterPro" id="IPR033656">
    <property type="entry name" value="HisRS_anticodon"/>
</dbReference>
<dbReference type="NCBIfam" id="TIGR00442">
    <property type="entry name" value="hisS"/>
    <property type="match status" value="1"/>
</dbReference>
<dbReference type="PANTHER" id="PTHR11476:SF7">
    <property type="entry name" value="HISTIDINE--TRNA LIGASE"/>
    <property type="match status" value="1"/>
</dbReference>
<dbReference type="PANTHER" id="PTHR11476">
    <property type="entry name" value="HISTIDYL-TRNA SYNTHETASE"/>
    <property type="match status" value="1"/>
</dbReference>
<dbReference type="Pfam" id="PF03129">
    <property type="entry name" value="HGTP_anticodon"/>
    <property type="match status" value="1"/>
</dbReference>
<dbReference type="Pfam" id="PF13393">
    <property type="entry name" value="tRNA-synt_His"/>
    <property type="match status" value="1"/>
</dbReference>
<dbReference type="PIRSF" id="PIRSF001549">
    <property type="entry name" value="His-tRNA_synth"/>
    <property type="match status" value="1"/>
</dbReference>
<dbReference type="SUPFAM" id="SSF52954">
    <property type="entry name" value="Class II aaRS ABD-related"/>
    <property type="match status" value="1"/>
</dbReference>
<dbReference type="SUPFAM" id="SSF55681">
    <property type="entry name" value="Class II aaRS and biotin synthetases"/>
    <property type="match status" value="1"/>
</dbReference>
<dbReference type="PROSITE" id="PS50862">
    <property type="entry name" value="AA_TRNA_LIGASE_II"/>
    <property type="match status" value="1"/>
</dbReference>
<organism>
    <name type="scientific">Borreliella burgdorferi (strain ZS7)</name>
    <name type="common">Borrelia burgdorferi</name>
    <dbReference type="NCBI Taxonomy" id="445985"/>
    <lineage>
        <taxon>Bacteria</taxon>
        <taxon>Pseudomonadati</taxon>
        <taxon>Spirochaetota</taxon>
        <taxon>Spirochaetia</taxon>
        <taxon>Spirochaetales</taxon>
        <taxon>Borreliaceae</taxon>
        <taxon>Borreliella</taxon>
    </lineage>
</organism>
<accession>B7J168</accession>
<name>SYH_BORBZ</name>
<gene>
    <name evidence="1" type="primary">hisS</name>
    <name type="ordered locus">BbuZS7_0135</name>
</gene>
<evidence type="ECO:0000255" key="1">
    <source>
        <dbReference type="HAMAP-Rule" id="MF_00127"/>
    </source>
</evidence>
<keyword id="KW-0030">Aminoacyl-tRNA synthetase</keyword>
<keyword id="KW-0067">ATP-binding</keyword>
<keyword id="KW-0963">Cytoplasm</keyword>
<keyword id="KW-0436">Ligase</keyword>
<keyword id="KW-0547">Nucleotide-binding</keyword>
<keyword id="KW-0648">Protein biosynthesis</keyword>
<sequence length="456" mass="52718">MDIKTLKGFKDYLPKDSLIRIHIVRQIFSVLNSYNFDLIDTPVLEYSDLLLKKSGDETEKQIYRFKDNGGRDVSMRFDLTVPFARFVATNISALKLPFRRSQFGKVFRGENSQKGRYREFMQFDFDIVGEDTFRGDAEILSVVYYGLEEIFLNFIEGINKKFIIHYSHIGILNSFFEKLGLKEKSIFILRNIDKIDKIGIDKVKEALLLEIEKEAVDSILSLVSLQGTFKDKIQALKSILGDNESIKRVEDVFQHLSLLKIQDSFNLNLKISRGLDYYTGIVFESEVFGSNMGSVCSGGRYDNLVSSFSNSIQKISGVGGSFGVDRIKDIIDLEKFSYIKIFVTKARSKVLIVNLDSALQNYYYELATRFRNHDYSKVKNISCEVYFKNKNGKNIKEQIEYALSKEIRFLVFVGQEEYKENKMKVRDLTKKEELLLSFEESINLIKCNEKLLCTPF</sequence>
<feature type="chain" id="PRO_1000199117" description="Histidine--tRNA ligase">
    <location>
        <begin position="1"/>
        <end position="456"/>
    </location>
</feature>
<protein>
    <recommendedName>
        <fullName evidence="1">Histidine--tRNA ligase</fullName>
        <ecNumber evidence="1">6.1.1.21</ecNumber>
    </recommendedName>
    <alternativeName>
        <fullName evidence="1">Histidyl-tRNA synthetase</fullName>
        <shortName evidence="1">HisRS</shortName>
    </alternativeName>
</protein>
<reference key="1">
    <citation type="journal article" date="2011" name="J. Bacteriol.">
        <title>Whole-genome sequences of thirteen isolates of Borrelia burgdorferi.</title>
        <authorList>
            <person name="Schutzer S.E."/>
            <person name="Fraser-Liggett C.M."/>
            <person name="Casjens S.R."/>
            <person name="Qiu W.G."/>
            <person name="Dunn J.J."/>
            <person name="Mongodin E.F."/>
            <person name="Luft B.J."/>
        </authorList>
    </citation>
    <scope>NUCLEOTIDE SEQUENCE [LARGE SCALE GENOMIC DNA]</scope>
    <source>
        <strain>ZS7</strain>
    </source>
</reference>